<name>SYGA_STRPG</name>
<feature type="chain" id="PRO_1000047504" description="Glycine--tRNA ligase alpha subunit">
    <location>
        <begin position="1"/>
        <end position="305"/>
    </location>
</feature>
<keyword id="KW-0030">Aminoacyl-tRNA synthetase</keyword>
<keyword id="KW-0067">ATP-binding</keyword>
<keyword id="KW-0963">Cytoplasm</keyword>
<keyword id="KW-0436">Ligase</keyword>
<keyword id="KW-0547">Nucleotide-binding</keyword>
<keyword id="KW-0648">Protein biosynthesis</keyword>
<protein>
    <recommendedName>
        <fullName evidence="1">Glycine--tRNA ligase alpha subunit</fullName>
        <ecNumber evidence="1">6.1.1.14</ecNumber>
    </recommendedName>
    <alternativeName>
        <fullName evidence="1">Glycyl-tRNA synthetase alpha subunit</fullName>
        <shortName evidence="1">GlyRS</shortName>
    </alternativeName>
</protein>
<organism>
    <name type="scientific">Streptococcus pyogenes serotype M5 (strain Manfredo)</name>
    <dbReference type="NCBI Taxonomy" id="160491"/>
    <lineage>
        <taxon>Bacteria</taxon>
        <taxon>Bacillati</taxon>
        <taxon>Bacillota</taxon>
        <taxon>Bacilli</taxon>
        <taxon>Lactobacillales</taxon>
        <taxon>Streptococcaceae</taxon>
        <taxon>Streptococcus</taxon>
    </lineage>
</organism>
<reference key="1">
    <citation type="journal article" date="2007" name="J. Bacteriol.">
        <title>Complete genome of acute rheumatic fever-associated serotype M5 Streptococcus pyogenes strain Manfredo.</title>
        <authorList>
            <person name="Holden M.T.G."/>
            <person name="Scott A."/>
            <person name="Cherevach I."/>
            <person name="Chillingworth T."/>
            <person name="Churcher C."/>
            <person name="Cronin A."/>
            <person name="Dowd L."/>
            <person name="Feltwell T."/>
            <person name="Hamlin N."/>
            <person name="Holroyd S."/>
            <person name="Jagels K."/>
            <person name="Moule S."/>
            <person name="Mungall K."/>
            <person name="Quail M.A."/>
            <person name="Price C."/>
            <person name="Rabbinowitsch E."/>
            <person name="Sharp S."/>
            <person name="Skelton J."/>
            <person name="Whitehead S."/>
            <person name="Barrell B.G."/>
            <person name="Kehoe M."/>
            <person name="Parkhill J."/>
        </authorList>
    </citation>
    <scope>NUCLEOTIDE SEQUENCE [LARGE SCALE GENOMIC DNA]</scope>
    <source>
        <strain>Manfredo</strain>
    </source>
</reference>
<evidence type="ECO:0000255" key="1">
    <source>
        <dbReference type="HAMAP-Rule" id="MF_00254"/>
    </source>
</evidence>
<accession>A2RD23</accession>
<proteinExistence type="inferred from homology"/>
<sequence>MSKKLTFQEIILTLQQYWNDQGCMLMQAYDNEKGAGTMSPYTFLRAIGPEPWNAAYVEPSRRPADGRYGENPNRLYQHHQFQVVMKPSPSNIQELYLASLEKLGINPLEHDIRFVEDNWENPSTGSAGLGWEVWLDGMEITQFTYFQQVGGLATSPVTAEVTYGLERLASYIQEVDSVYDIEWAPGVKYGEIFLQPEYEHSKYSFEISDQDMLLENFEKFEKEASRALEEGLVHPAYDYVLKCSHTFNLLDARGAVSVTERAGYIARIRNLARVVAKTFVAERKKLGFPLLDEATRAILLAEDDE</sequence>
<gene>
    <name evidence="1" type="primary">glyQ</name>
    <name type="ordered locus">SpyM50405</name>
</gene>
<dbReference type="EC" id="6.1.1.14" evidence="1"/>
<dbReference type="EMBL" id="AM295007">
    <property type="protein sequence ID" value="CAM29748.1"/>
    <property type="molecule type" value="Genomic_DNA"/>
</dbReference>
<dbReference type="RefSeq" id="WP_010922565.1">
    <property type="nucleotide sequence ID" value="NC_009332.1"/>
</dbReference>
<dbReference type="SMR" id="A2RD23"/>
<dbReference type="KEGG" id="spf:SpyM50405"/>
<dbReference type="HOGENOM" id="CLU_057066_1_0_9"/>
<dbReference type="GO" id="GO:0005829">
    <property type="term" value="C:cytosol"/>
    <property type="evidence" value="ECO:0007669"/>
    <property type="project" value="TreeGrafter"/>
</dbReference>
<dbReference type="GO" id="GO:0005524">
    <property type="term" value="F:ATP binding"/>
    <property type="evidence" value="ECO:0007669"/>
    <property type="project" value="UniProtKB-UniRule"/>
</dbReference>
<dbReference type="GO" id="GO:0140096">
    <property type="term" value="F:catalytic activity, acting on a protein"/>
    <property type="evidence" value="ECO:0007669"/>
    <property type="project" value="UniProtKB-ARBA"/>
</dbReference>
<dbReference type="GO" id="GO:0004820">
    <property type="term" value="F:glycine-tRNA ligase activity"/>
    <property type="evidence" value="ECO:0007669"/>
    <property type="project" value="UniProtKB-UniRule"/>
</dbReference>
<dbReference type="GO" id="GO:0016740">
    <property type="term" value="F:transferase activity"/>
    <property type="evidence" value="ECO:0007669"/>
    <property type="project" value="UniProtKB-ARBA"/>
</dbReference>
<dbReference type="GO" id="GO:0006426">
    <property type="term" value="P:glycyl-tRNA aminoacylation"/>
    <property type="evidence" value="ECO:0007669"/>
    <property type="project" value="UniProtKB-UniRule"/>
</dbReference>
<dbReference type="CDD" id="cd00733">
    <property type="entry name" value="GlyRS_alpha_core"/>
    <property type="match status" value="1"/>
</dbReference>
<dbReference type="FunFam" id="3.30.930.10:FF:000006">
    <property type="entry name" value="Glycine--tRNA ligase alpha subunit"/>
    <property type="match status" value="1"/>
</dbReference>
<dbReference type="Gene3D" id="3.30.930.10">
    <property type="entry name" value="Bira Bifunctional Protein, Domain 2"/>
    <property type="match status" value="1"/>
</dbReference>
<dbReference type="Gene3D" id="1.20.58.180">
    <property type="entry name" value="Class II aaRS and biotin synthetases, domain 2"/>
    <property type="match status" value="1"/>
</dbReference>
<dbReference type="HAMAP" id="MF_00254">
    <property type="entry name" value="Gly_tRNA_synth_alpha"/>
    <property type="match status" value="1"/>
</dbReference>
<dbReference type="InterPro" id="IPR045864">
    <property type="entry name" value="aa-tRNA-synth_II/BPL/LPL"/>
</dbReference>
<dbReference type="InterPro" id="IPR006194">
    <property type="entry name" value="Gly-tRNA-synth_heterodimer"/>
</dbReference>
<dbReference type="InterPro" id="IPR002310">
    <property type="entry name" value="Gly-tRNA_ligase_asu"/>
</dbReference>
<dbReference type="NCBIfam" id="TIGR00388">
    <property type="entry name" value="glyQ"/>
    <property type="match status" value="1"/>
</dbReference>
<dbReference type="NCBIfam" id="NF006827">
    <property type="entry name" value="PRK09348.1"/>
    <property type="match status" value="1"/>
</dbReference>
<dbReference type="PANTHER" id="PTHR30075:SF2">
    <property type="entry name" value="GLYCINE--TRNA LIGASE, CHLOROPLASTIC_MITOCHONDRIAL 2"/>
    <property type="match status" value="1"/>
</dbReference>
<dbReference type="PANTHER" id="PTHR30075">
    <property type="entry name" value="GLYCYL-TRNA SYNTHETASE"/>
    <property type="match status" value="1"/>
</dbReference>
<dbReference type="Pfam" id="PF02091">
    <property type="entry name" value="tRNA-synt_2e"/>
    <property type="match status" value="1"/>
</dbReference>
<dbReference type="PRINTS" id="PR01044">
    <property type="entry name" value="TRNASYNTHGA"/>
</dbReference>
<dbReference type="SUPFAM" id="SSF55681">
    <property type="entry name" value="Class II aaRS and biotin synthetases"/>
    <property type="match status" value="1"/>
</dbReference>
<dbReference type="PROSITE" id="PS50861">
    <property type="entry name" value="AA_TRNA_LIGASE_II_GLYAB"/>
    <property type="match status" value="1"/>
</dbReference>
<comment type="catalytic activity">
    <reaction evidence="1">
        <text>tRNA(Gly) + glycine + ATP = glycyl-tRNA(Gly) + AMP + diphosphate</text>
        <dbReference type="Rhea" id="RHEA:16013"/>
        <dbReference type="Rhea" id="RHEA-COMP:9664"/>
        <dbReference type="Rhea" id="RHEA-COMP:9683"/>
        <dbReference type="ChEBI" id="CHEBI:30616"/>
        <dbReference type="ChEBI" id="CHEBI:33019"/>
        <dbReference type="ChEBI" id="CHEBI:57305"/>
        <dbReference type="ChEBI" id="CHEBI:78442"/>
        <dbReference type="ChEBI" id="CHEBI:78522"/>
        <dbReference type="ChEBI" id="CHEBI:456215"/>
        <dbReference type="EC" id="6.1.1.14"/>
    </reaction>
</comment>
<comment type="subunit">
    <text evidence="1">Tetramer of two alpha and two beta subunits.</text>
</comment>
<comment type="subcellular location">
    <subcellularLocation>
        <location evidence="1">Cytoplasm</location>
    </subcellularLocation>
</comment>
<comment type="similarity">
    <text evidence="1">Belongs to the class-II aminoacyl-tRNA synthetase family.</text>
</comment>